<proteinExistence type="inferred from homology"/>
<comment type="function">
    <text>The branched-chain alpha-keto dehydrogenase complex catalyzes the overall conversion of alpha-keto acids to acyl-CoA and CO(2). It contains multiple copies of 3 enzymatic components: branched-chain alpha-keto acid decarboxylase (E1), lipoamide acyltransferase (E2) and lipoamide dehydrogenase (E3).</text>
</comment>
<comment type="catalytic activity">
    <reaction>
        <text>N(6)-[(R)-dihydrolipoyl]-L-lysyl-[protein] + NAD(+) = N(6)-[(R)-lipoyl]-L-lysyl-[protein] + NADH + H(+)</text>
        <dbReference type="Rhea" id="RHEA:15045"/>
        <dbReference type="Rhea" id="RHEA-COMP:10474"/>
        <dbReference type="Rhea" id="RHEA-COMP:10475"/>
        <dbReference type="ChEBI" id="CHEBI:15378"/>
        <dbReference type="ChEBI" id="CHEBI:57540"/>
        <dbReference type="ChEBI" id="CHEBI:57945"/>
        <dbReference type="ChEBI" id="CHEBI:83099"/>
        <dbReference type="ChEBI" id="CHEBI:83100"/>
        <dbReference type="EC" id="1.8.1.4"/>
    </reaction>
</comment>
<comment type="cofactor">
    <cofactor evidence="1">
        <name>FAD</name>
        <dbReference type="ChEBI" id="CHEBI:57692"/>
    </cofactor>
    <text evidence="1">Binds 1 FAD per subunit.</text>
</comment>
<comment type="subunit">
    <text evidence="1">Homodimer.</text>
</comment>
<comment type="subcellular location">
    <subcellularLocation>
        <location evidence="1">Cytoplasm</location>
    </subcellularLocation>
</comment>
<comment type="miscellaneous">
    <text evidence="1">The active site is a redox-active disulfide bond.</text>
</comment>
<comment type="similarity">
    <text evidence="2">Belongs to the class-I pyridine nucleotide-disulfide oxidoreductase family.</text>
</comment>
<comment type="sequence caution" evidence="2">
    <conflict type="frameshift">
        <sequence resource="EMBL" id="M97391"/>
    </conflict>
</comment>
<reference key="1">
    <citation type="journal article" date="1996" name="Microbiology">
        <title>Systematic sequencing of the 283 kb 210 degrees-232 degrees region of the Bacillus subtilis genome containing the skin element and many sporulation genes.</title>
        <authorList>
            <person name="Mizuno M."/>
            <person name="Masuda S."/>
            <person name="Takemaru K."/>
            <person name="Hosono S."/>
            <person name="Sato T."/>
            <person name="Takeuchi M."/>
            <person name="Kobayashi Y."/>
        </authorList>
    </citation>
    <scope>NUCLEOTIDE SEQUENCE [GENOMIC DNA]</scope>
    <source>
        <strain>168 / JH642</strain>
    </source>
</reference>
<reference key="2">
    <citation type="journal article" date="1997" name="Nature">
        <title>The complete genome sequence of the Gram-positive bacterium Bacillus subtilis.</title>
        <authorList>
            <person name="Kunst F."/>
            <person name="Ogasawara N."/>
            <person name="Moszer I."/>
            <person name="Albertini A.M."/>
            <person name="Alloni G."/>
            <person name="Azevedo V."/>
            <person name="Bertero M.G."/>
            <person name="Bessieres P."/>
            <person name="Bolotin A."/>
            <person name="Borchert S."/>
            <person name="Borriss R."/>
            <person name="Boursier L."/>
            <person name="Brans A."/>
            <person name="Braun M."/>
            <person name="Brignell S.C."/>
            <person name="Bron S."/>
            <person name="Brouillet S."/>
            <person name="Bruschi C.V."/>
            <person name="Caldwell B."/>
            <person name="Capuano V."/>
            <person name="Carter N.M."/>
            <person name="Choi S.-K."/>
            <person name="Codani J.-J."/>
            <person name="Connerton I.F."/>
            <person name="Cummings N.J."/>
            <person name="Daniel R.A."/>
            <person name="Denizot F."/>
            <person name="Devine K.M."/>
            <person name="Duesterhoeft A."/>
            <person name="Ehrlich S.D."/>
            <person name="Emmerson P.T."/>
            <person name="Entian K.-D."/>
            <person name="Errington J."/>
            <person name="Fabret C."/>
            <person name="Ferrari E."/>
            <person name="Foulger D."/>
            <person name="Fritz C."/>
            <person name="Fujita M."/>
            <person name="Fujita Y."/>
            <person name="Fuma S."/>
            <person name="Galizzi A."/>
            <person name="Galleron N."/>
            <person name="Ghim S.-Y."/>
            <person name="Glaser P."/>
            <person name="Goffeau A."/>
            <person name="Golightly E.J."/>
            <person name="Grandi G."/>
            <person name="Guiseppi G."/>
            <person name="Guy B.J."/>
            <person name="Haga K."/>
            <person name="Haiech J."/>
            <person name="Harwood C.R."/>
            <person name="Henaut A."/>
            <person name="Hilbert H."/>
            <person name="Holsappel S."/>
            <person name="Hosono S."/>
            <person name="Hullo M.-F."/>
            <person name="Itaya M."/>
            <person name="Jones L.-M."/>
            <person name="Joris B."/>
            <person name="Karamata D."/>
            <person name="Kasahara Y."/>
            <person name="Klaerr-Blanchard M."/>
            <person name="Klein C."/>
            <person name="Kobayashi Y."/>
            <person name="Koetter P."/>
            <person name="Koningstein G."/>
            <person name="Krogh S."/>
            <person name="Kumano M."/>
            <person name="Kurita K."/>
            <person name="Lapidus A."/>
            <person name="Lardinois S."/>
            <person name="Lauber J."/>
            <person name="Lazarevic V."/>
            <person name="Lee S.-M."/>
            <person name="Levine A."/>
            <person name="Liu H."/>
            <person name="Masuda S."/>
            <person name="Mauel C."/>
            <person name="Medigue C."/>
            <person name="Medina N."/>
            <person name="Mellado R.P."/>
            <person name="Mizuno M."/>
            <person name="Moestl D."/>
            <person name="Nakai S."/>
            <person name="Noback M."/>
            <person name="Noone D."/>
            <person name="O'Reilly M."/>
            <person name="Ogawa K."/>
            <person name="Ogiwara A."/>
            <person name="Oudega B."/>
            <person name="Park S.-H."/>
            <person name="Parro V."/>
            <person name="Pohl T.M."/>
            <person name="Portetelle D."/>
            <person name="Porwollik S."/>
            <person name="Prescott A.M."/>
            <person name="Presecan E."/>
            <person name="Pujic P."/>
            <person name="Purnelle B."/>
            <person name="Rapoport G."/>
            <person name="Rey M."/>
            <person name="Reynolds S."/>
            <person name="Rieger M."/>
            <person name="Rivolta C."/>
            <person name="Rocha E."/>
            <person name="Roche B."/>
            <person name="Rose M."/>
            <person name="Sadaie Y."/>
            <person name="Sato T."/>
            <person name="Scanlan E."/>
            <person name="Schleich S."/>
            <person name="Schroeter R."/>
            <person name="Scoffone F."/>
            <person name="Sekiguchi J."/>
            <person name="Sekowska A."/>
            <person name="Seror S.J."/>
            <person name="Serror P."/>
            <person name="Shin B.-S."/>
            <person name="Soldo B."/>
            <person name="Sorokin A."/>
            <person name="Tacconi E."/>
            <person name="Takagi T."/>
            <person name="Takahashi H."/>
            <person name="Takemaru K."/>
            <person name="Takeuchi M."/>
            <person name="Tamakoshi A."/>
            <person name="Tanaka T."/>
            <person name="Terpstra P."/>
            <person name="Tognoni A."/>
            <person name="Tosato V."/>
            <person name="Uchiyama S."/>
            <person name="Vandenbol M."/>
            <person name="Vannier F."/>
            <person name="Vassarotti A."/>
            <person name="Viari A."/>
            <person name="Wambutt R."/>
            <person name="Wedler E."/>
            <person name="Wedler H."/>
            <person name="Weitzenegger T."/>
            <person name="Winters P."/>
            <person name="Wipat A."/>
            <person name="Yamamoto H."/>
            <person name="Yamane K."/>
            <person name="Yasumoto K."/>
            <person name="Yata K."/>
            <person name="Yoshida K."/>
            <person name="Yoshikawa H.-F."/>
            <person name="Zumstein E."/>
            <person name="Yoshikawa H."/>
            <person name="Danchin A."/>
        </authorList>
    </citation>
    <scope>NUCLEOTIDE SEQUENCE [LARGE SCALE GENOMIC DNA]</scope>
    <source>
        <strain>168</strain>
    </source>
</reference>
<reference key="3">
    <citation type="journal article" date="2009" name="Microbiology">
        <title>From a consortium sequence to a unified sequence: the Bacillus subtilis 168 reference genome a decade later.</title>
        <authorList>
            <person name="Barbe V."/>
            <person name="Cruveiller S."/>
            <person name="Kunst F."/>
            <person name="Lenoble P."/>
            <person name="Meurice G."/>
            <person name="Sekowska A."/>
            <person name="Vallenet D."/>
            <person name="Wang T."/>
            <person name="Moszer I."/>
            <person name="Medigue C."/>
            <person name="Danchin A."/>
        </authorList>
    </citation>
    <scope>SEQUENCE REVISION TO C-TERMINUS</scope>
</reference>
<reference key="4">
    <citation type="journal article" date="1993" name="Eur. J. Biochem.">
        <title>The primary structure of branched-chain alpha-oxo acid dehydrogenase from Bacillus subtilis and its similarity to other alpha-oxo acid dehydrogenases.</title>
        <authorList>
            <person name="Wang G.-F."/>
            <person name="Kuriki T."/>
            <person name="Roy K.L."/>
            <person name="Kaneda T."/>
        </authorList>
    </citation>
    <scope>NUCLEOTIDE SEQUENCE [GENOMIC DNA] OF 412-474</scope>
    <source>
        <strain>168</strain>
    </source>
</reference>
<accession>P54533</accession>
<sequence length="474" mass="50436">MATEYDVVILGGGTGGYVAAIRAAQLGLKTAVVEKEKLGGTCLHKGCIPSKALLRSAEVYRTAREADQFGVETAGVSLNFEKVQQRKQAVVDKLAAGVNHLMKKGKIDVYTGYGRILGPSIFSPLPGTISVERGNGEENDMLIPKQVIIATGSRPRMLPGLEVDGKSVLTSDEALQMEELPQSIIIVGGGVIGIEWASMLHDFGVKVTVIEYADRILPTEDLEISKEMESLLKKKGIQFITGAKVLPDTMTKTSDDISIQAEKDGETVTYSAEKMLVSIGRQANIEGIGLENTDIVTENGMISVNESCQTKESHIYAIGDVIGGLQLAHVASHEGIIAVEHFAGLNPHPLDPTLVPKCIYSSPEAASVGLTEDEAKANGHNVKIGKFPFMAIGKALVYGESDGFVKIVADRDTDDILGVHMIGPHVTDMISEAGLAKVLDATPWEVGQTIHPHPTLSEAIGEAALAADGKAIHF</sequence>
<protein>
    <recommendedName>
        <fullName>Dihydrolipoyl dehydrogenase</fullName>
        <ecNumber>1.8.1.4</ecNumber>
    </recommendedName>
    <alternativeName>
        <fullName>Dihydrolipoamide dehydrogenase</fullName>
    </alternativeName>
    <alternativeName>
        <fullName>E3 component of branched-chain alpha-keto acid dehydrogenase complex</fullName>
    </alternativeName>
    <alternativeName>
        <fullName>LPD-Val</fullName>
    </alternativeName>
</protein>
<feature type="chain" id="PRO_0000068017" description="Dihydrolipoyl dehydrogenase">
    <location>
        <begin position="1"/>
        <end position="474"/>
    </location>
</feature>
<feature type="active site" description="Proton acceptor" evidence="1">
    <location>
        <position position="453"/>
    </location>
</feature>
<feature type="binding site" evidence="1">
    <location>
        <begin position="34"/>
        <end position="42"/>
    </location>
    <ligand>
        <name>FAD</name>
        <dbReference type="ChEBI" id="CHEBI:57692"/>
    </ligand>
</feature>
<feature type="binding site" evidence="1">
    <location>
        <position position="51"/>
    </location>
    <ligand>
        <name>FAD</name>
        <dbReference type="ChEBI" id="CHEBI:57692"/>
    </ligand>
</feature>
<feature type="binding site" evidence="1">
    <location>
        <position position="114"/>
    </location>
    <ligand>
        <name>FAD</name>
        <dbReference type="ChEBI" id="CHEBI:57692"/>
    </ligand>
</feature>
<feature type="binding site" evidence="1">
    <location>
        <begin position="188"/>
        <end position="192"/>
    </location>
    <ligand>
        <name>NAD(+)</name>
        <dbReference type="ChEBI" id="CHEBI:57540"/>
    </ligand>
</feature>
<feature type="binding site" evidence="1">
    <location>
        <position position="211"/>
    </location>
    <ligand>
        <name>NAD(+)</name>
        <dbReference type="ChEBI" id="CHEBI:57540"/>
    </ligand>
</feature>
<feature type="binding site" evidence="1">
    <location>
        <position position="245"/>
    </location>
    <ligand>
        <name>NAD(+)</name>
        <dbReference type="ChEBI" id="CHEBI:57540"/>
    </ligand>
</feature>
<feature type="binding site" evidence="1">
    <location>
        <begin position="278"/>
        <end position="281"/>
    </location>
    <ligand>
        <name>NAD(+)</name>
        <dbReference type="ChEBI" id="CHEBI:57540"/>
    </ligand>
</feature>
<feature type="binding site" evidence="1">
    <location>
        <position position="320"/>
    </location>
    <ligand>
        <name>FAD</name>
        <dbReference type="ChEBI" id="CHEBI:57692"/>
    </ligand>
</feature>
<feature type="binding site" evidence="1">
    <location>
        <position position="328"/>
    </location>
    <ligand>
        <name>FAD</name>
        <dbReference type="ChEBI" id="CHEBI:57692"/>
    </ligand>
</feature>
<feature type="disulfide bond" description="Redox-active" evidence="1">
    <location>
        <begin position="42"/>
        <end position="47"/>
    </location>
</feature>
<feature type="sequence conflict" description="In Ref. 1; BAA12597." evidence="2" ref="1">
    <original>HPHPTLSEAIGEAALAADGKAIH</original>
    <variation>SPASNA</variation>
    <location>
        <begin position="451"/>
        <end position="473"/>
    </location>
</feature>
<evidence type="ECO:0000250" key="1"/>
<evidence type="ECO:0000305" key="2"/>
<keyword id="KW-0963">Cytoplasm</keyword>
<keyword id="KW-1015">Disulfide bond</keyword>
<keyword id="KW-0274">FAD</keyword>
<keyword id="KW-0285">Flavoprotein</keyword>
<keyword id="KW-0520">NAD</keyword>
<keyword id="KW-0560">Oxidoreductase</keyword>
<keyword id="KW-0676">Redox-active center</keyword>
<keyword id="KW-1185">Reference proteome</keyword>
<name>DLDH2_BACSU</name>
<dbReference type="EC" id="1.8.1.4"/>
<dbReference type="EMBL" id="D84432">
    <property type="protein sequence ID" value="BAA12597.1"/>
    <property type="molecule type" value="Genomic_DNA"/>
</dbReference>
<dbReference type="EMBL" id="AL009126">
    <property type="protein sequence ID" value="CAB14337.2"/>
    <property type="molecule type" value="Genomic_DNA"/>
</dbReference>
<dbReference type="EMBL" id="M97391">
    <property type="status" value="NOT_ANNOTATED_CDS"/>
    <property type="molecule type" value="Genomic_DNA"/>
</dbReference>
<dbReference type="PIR" id="D69962">
    <property type="entry name" value="D69962"/>
</dbReference>
<dbReference type="SMR" id="P54533"/>
<dbReference type="FunCoup" id="P54533">
    <property type="interactions" value="439"/>
</dbReference>
<dbReference type="STRING" id="224308.BSU24060"/>
<dbReference type="jPOST" id="P54533"/>
<dbReference type="PaxDb" id="224308-BSU24060"/>
<dbReference type="EnsemblBacteria" id="CAB14337">
    <property type="protein sequence ID" value="CAB14337"/>
    <property type="gene ID" value="BSU_24060"/>
</dbReference>
<dbReference type="GeneID" id="938669"/>
<dbReference type="KEGG" id="bsu:BSU24060"/>
<dbReference type="PATRIC" id="fig|224308.179.peg.2620"/>
<dbReference type="eggNOG" id="COG1249">
    <property type="taxonomic scope" value="Bacteria"/>
</dbReference>
<dbReference type="InParanoid" id="P54533"/>
<dbReference type="OrthoDB" id="9800167at2"/>
<dbReference type="PhylomeDB" id="P54533"/>
<dbReference type="BioCyc" id="BSUB:BSU24060-MONOMER"/>
<dbReference type="Proteomes" id="UP000001570">
    <property type="component" value="Chromosome"/>
</dbReference>
<dbReference type="GO" id="GO:0005737">
    <property type="term" value="C:cytoplasm"/>
    <property type="evidence" value="ECO:0007669"/>
    <property type="project" value="UniProtKB-SubCell"/>
</dbReference>
<dbReference type="GO" id="GO:0004148">
    <property type="term" value="F:dihydrolipoyl dehydrogenase (NADH) activity"/>
    <property type="evidence" value="ECO:0000318"/>
    <property type="project" value="GO_Central"/>
</dbReference>
<dbReference type="GO" id="GO:0050660">
    <property type="term" value="F:flavin adenine dinucleotide binding"/>
    <property type="evidence" value="ECO:0000318"/>
    <property type="project" value="GO_Central"/>
</dbReference>
<dbReference type="GO" id="GO:0006103">
    <property type="term" value="P:2-oxoglutarate metabolic process"/>
    <property type="evidence" value="ECO:0000318"/>
    <property type="project" value="GO_Central"/>
</dbReference>
<dbReference type="GO" id="GO:0006090">
    <property type="term" value="P:pyruvate metabolic process"/>
    <property type="evidence" value="ECO:0000318"/>
    <property type="project" value="GO_Central"/>
</dbReference>
<dbReference type="FunFam" id="3.30.390.30:FF:000001">
    <property type="entry name" value="Dihydrolipoyl dehydrogenase"/>
    <property type="match status" value="1"/>
</dbReference>
<dbReference type="Gene3D" id="3.30.390.30">
    <property type="match status" value="1"/>
</dbReference>
<dbReference type="Gene3D" id="3.50.50.60">
    <property type="entry name" value="FAD/NAD(P)-binding domain"/>
    <property type="match status" value="2"/>
</dbReference>
<dbReference type="InterPro" id="IPR050151">
    <property type="entry name" value="Class-I_Pyr_Nuc-Dis_Oxidored"/>
</dbReference>
<dbReference type="InterPro" id="IPR036188">
    <property type="entry name" value="FAD/NAD-bd_sf"/>
</dbReference>
<dbReference type="InterPro" id="IPR023753">
    <property type="entry name" value="FAD/NAD-binding_dom"/>
</dbReference>
<dbReference type="InterPro" id="IPR016156">
    <property type="entry name" value="FAD/NAD-linked_Rdtase_dimer_sf"/>
</dbReference>
<dbReference type="InterPro" id="IPR006258">
    <property type="entry name" value="Lipoamide_DH"/>
</dbReference>
<dbReference type="InterPro" id="IPR001100">
    <property type="entry name" value="Pyr_nuc-diS_OxRdtase"/>
</dbReference>
<dbReference type="InterPro" id="IPR004099">
    <property type="entry name" value="Pyr_nucl-diS_OxRdtase_dimer"/>
</dbReference>
<dbReference type="InterPro" id="IPR012999">
    <property type="entry name" value="Pyr_OxRdtase_I_AS"/>
</dbReference>
<dbReference type="NCBIfam" id="TIGR01350">
    <property type="entry name" value="lipoamide_DH"/>
    <property type="match status" value="1"/>
</dbReference>
<dbReference type="PANTHER" id="PTHR22912:SF217">
    <property type="entry name" value="DIHYDROLIPOYL DEHYDROGENASE"/>
    <property type="match status" value="1"/>
</dbReference>
<dbReference type="PANTHER" id="PTHR22912">
    <property type="entry name" value="DISULFIDE OXIDOREDUCTASE"/>
    <property type="match status" value="1"/>
</dbReference>
<dbReference type="Pfam" id="PF07992">
    <property type="entry name" value="Pyr_redox_2"/>
    <property type="match status" value="1"/>
</dbReference>
<dbReference type="Pfam" id="PF02852">
    <property type="entry name" value="Pyr_redox_dim"/>
    <property type="match status" value="1"/>
</dbReference>
<dbReference type="PIRSF" id="PIRSF000350">
    <property type="entry name" value="Mercury_reductase_MerA"/>
    <property type="match status" value="1"/>
</dbReference>
<dbReference type="PRINTS" id="PR00368">
    <property type="entry name" value="FADPNR"/>
</dbReference>
<dbReference type="PRINTS" id="PR00411">
    <property type="entry name" value="PNDRDTASEI"/>
</dbReference>
<dbReference type="SUPFAM" id="SSF51905">
    <property type="entry name" value="FAD/NAD(P)-binding domain"/>
    <property type="match status" value="1"/>
</dbReference>
<dbReference type="SUPFAM" id="SSF55424">
    <property type="entry name" value="FAD/NAD-linked reductases, dimerisation (C-terminal) domain"/>
    <property type="match status" value="1"/>
</dbReference>
<dbReference type="PROSITE" id="PS00076">
    <property type="entry name" value="PYRIDINE_REDOX_1"/>
    <property type="match status" value="1"/>
</dbReference>
<organism>
    <name type="scientific">Bacillus subtilis (strain 168)</name>
    <dbReference type="NCBI Taxonomy" id="224308"/>
    <lineage>
        <taxon>Bacteria</taxon>
        <taxon>Bacillati</taxon>
        <taxon>Bacillota</taxon>
        <taxon>Bacilli</taxon>
        <taxon>Bacillales</taxon>
        <taxon>Bacillaceae</taxon>
        <taxon>Bacillus</taxon>
    </lineage>
</organism>
<gene>
    <name type="primary">bfmBC</name>
    <name type="synonym">yqiV</name>
    <name type="ordered locus">BSU24060</name>
</gene>